<name>GTR5_RABIT</name>
<feature type="chain" id="PRO_0000050371" description="Solute carrier family 2, facilitated glucose transporter member 5">
    <location>
        <begin position="1"/>
        <end position="486"/>
    </location>
</feature>
<feature type="topological domain" description="Cytoplasmic" evidence="2">
    <location>
        <begin position="1"/>
        <end position="19"/>
    </location>
</feature>
<feature type="transmembrane region" description="Helical; Name=1" evidence="2">
    <location>
        <begin position="20"/>
        <end position="40"/>
    </location>
</feature>
<feature type="topological domain" description="Extracellular" evidence="2">
    <location>
        <begin position="41"/>
        <end position="69"/>
    </location>
</feature>
<feature type="transmembrane region" description="Helical; Name=2" evidence="2">
    <location>
        <begin position="70"/>
        <end position="92"/>
    </location>
</feature>
<feature type="topological domain" description="Cytoplasmic" evidence="2">
    <location>
        <begin position="93"/>
        <end position="99"/>
    </location>
</feature>
<feature type="transmembrane region" description="Helical; Name=3" evidence="2">
    <location>
        <begin position="100"/>
        <end position="120"/>
    </location>
</feature>
<feature type="topological domain" description="Extracellular" evidence="2">
    <location>
        <begin position="121"/>
        <end position="127"/>
    </location>
</feature>
<feature type="transmembrane region" description="Helical; Name=4" evidence="2">
    <location>
        <begin position="128"/>
        <end position="150"/>
    </location>
</feature>
<feature type="topological domain" description="Cytoplasmic" evidence="2">
    <location>
        <begin position="151"/>
        <end position="162"/>
    </location>
</feature>
<feature type="transmembrane region" description="Helical; Name=5" evidence="2">
    <location>
        <begin position="163"/>
        <end position="183"/>
    </location>
</feature>
<feature type="topological domain" description="Extracellular" evidence="2">
    <location>
        <begin position="184"/>
        <end position="192"/>
    </location>
</feature>
<feature type="transmembrane region" description="Helical; Name=6" evidence="2">
    <location>
        <begin position="193"/>
        <end position="211"/>
    </location>
</feature>
<feature type="topological domain" description="Cytoplasmic" evidence="2">
    <location>
        <begin position="212"/>
        <end position="274"/>
    </location>
</feature>
<feature type="transmembrane region" description="Helical; Name=7" evidence="2">
    <location>
        <begin position="275"/>
        <end position="294"/>
    </location>
</feature>
<feature type="topological domain" description="Extracellular" evidence="2">
    <location>
        <begin position="295"/>
        <end position="306"/>
    </location>
</feature>
<feature type="transmembrane region" description="Helical; Name=8" evidence="2">
    <location>
        <begin position="307"/>
        <end position="327"/>
    </location>
</feature>
<feature type="topological domain" description="Cytoplasmic" evidence="2">
    <location>
        <begin position="328"/>
        <end position="334"/>
    </location>
</feature>
<feature type="transmembrane region" description="Helical; Name=9" evidence="2">
    <location>
        <begin position="335"/>
        <end position="355"/>
    </location>
</feature>
<feature type="topological domain" description="Extracellular" evidence="2">
    <location>
        <begin position="356"/>
        <end position="363"/>
    </location>
</feature>
<feature type="transmembrane region" description="Helical; Name=10" evidence="2">
    <location>
        <begin position="364"/>
        <end position="385"/>
    </location>
</feature>
<feature type="topological domain" description="Cytoplasmic" evidence="2">
    <location>
        <begin position="386"/>
        <end position="402"/>
    </location>
</feature>
<feature type="transmembrane region" description="Helical; Name=11" evidence="2">
    <location>
        <begin position="403"/>
        <end position="421"/>
    </location>
</feature>
<feature type="topological domain" description="Extracellular" evidence="2">
    <location>
        <begin position="422"/>
        <end position="426"/>
    </location>
</feature>
<feature type="transmembrane region" description="Helical; Name=12" evidence="2">
    <location>
        <begin position="427"/>
        <end position="447"/>
    </location>
</feature>
<feature type="topological domain" description="Cytoplasmic" evidence="2">
    <location>
        <begin position="448"/>
        <end position="486"/>
    </location>
</feature>
<feature type="binding site" evidence="2">
    <location>
        <position position="33"/>
    </location>
    <ligand>
        <name>D-fructose</name>
        <dbReference type="ChEBI" id="CHEBI:37721"/>
    </ligand>
</feature>
<feature type="binding site" evidence="2">
    <location>
        <position position="168"/>
    </location>
    <ligand>
        <name>D-fructose</name>
        <dbReference type="ChEBI" id="CHEBI:37721"/>
    </ligand>
</feature>
<feature type="binding site" evidence="2">
    <location>
        <position position="284"/>
    </location>
    <ligand>
        <name>D-fructose</name>
        <dbReference type="ChEBI" id="CHEBI:37721"/>
    </ligand>
</feature>
<feature type="binding site" evidence="2">
    <location>
        <begin position="292"/>
        <end position="294"/>
    </location>
    <ligand>
        <name>D-fructose</name>
        <dbReference type="ChEBI" id="CHEBI:37721"/>
    </ligand>
</feature>
<feature type="binding site" evidence="2">
    <location>
        <position position="379"/>
    </location>
    <ligand>
        <name>D-fructose</name>
        <dbReference type="ChEBI" id="CHEBI:37721"/>
    </ligand>
</feature>
<feature type="binding site" evidence="2">
    <location>
        <begin position="407"/>
        <end position="408"/>
    </location>
    <ligand>
        <name>D-fructose</name>
        <dbReference type="ChEBI" id="CHEBI:37721"/>
    </ligand>
</feature>
<feature type="modified residue" description="N-acetylmethionine" evidence="1">
    <location>
        <position position="1"/>
    </location>
</feature>
<feature type="glycosylation site" description="N-linked (GlcNAc...) asparagine" evidence="4">
    <location>
        <position position="52"/>
    </location>
</feature>
<keyword id="KW-0007">Acetylation</keyword>
<keyword id="KW-1003">Cell membrane</keyword>
<keyword id="KW-0325">Glycoprotein</keyword>
<keyword id="KW-0472">Membrane</keyword>
<keyword id="KW-1185">Reference proteome</keyword>
<keyword id="KW-0762">Sugar transport</keyword>
<keyword id="KW-0812">Transmembrane</keyword>
<keyword id="KW-1133">Transmembrane helix</keyword>
<keyword id="KW-0813">Transport</keyword>
<gene>
    <name evidence="1" type="primary">SLC2A5</name>
    <name evidence="6" type="synonym">GLUT5</name>
</gene>
<proteinExistence type="evidence at protein level"/>
<organism>
    <name type="scientific">Oryctolagus cuniculus</name>
    <name type="common">Rabbit</name>
    <dbReference type="NCBI Taxonomy" id="9986"/>
    <lineage>
        <taxon>Eukaryota</taxon>
        <taxon>Metazoa</taxon>
        <taxon>Chordata</taxon>
        <taxon>Craniata</taxon>
        <taxon>Vertebrata</taxon>
        <taxon>Euteleostomi</taxon>
        <taxon>Mammalia</taxon>
        <taxon>Eutheria</taxon>
        <taxon>Euarchontoglires</taxon>
        <taxon>Glires</taxon>
        <taxon>Lagomorpha</taxon>
        <taxon>Leporidae</taxon>
        <taxon>Oryctolagus</taxon>
    </lineage>
</organism>
<comment type="function">
    <text evidence="2 3 5">Functions as a fructose transporter that has only low activity with other monosaccharides (PubMed:7980458). Can mediate the uptake of deoxyglucose, but with low efficiency (By similarity). Essential for fructose uptake in the small intestine. Plays a role in the regulation of salt uptake and blood pressure in response to dietary fructose. Required for the development of high blood pressure in response to high dietary fructose intake (By similarity).</text>
</comment>
<comment type="catalytic activity">
    <reaction evidence="1">
        <text>D-fructose(out) = D-fructose(in)</text>
        <dbReference type="Rhea" id="RHEA:60372"/>
        <dbReference type="ChEBI" id="CHEBI:37721"/>
    </reaction>
</comment>
<comment type="subcellular location">
    <subcellularLocation>
        <location evidence="3">Apical cell membrane</location>
        <topology evidence="3">Multi-pass membrane protein</topology>
    </subcellularLocation>
    <subcellularLocation>
        <location evidence="5">Cell membrane</location>
        <topology evidence="3">Multi-pass membrane protein</topology>
    </subcellularLocation>
    <subcellularLocation>
        <location evidence="2">Cell membrane</location>
        <location evidence="2">Sarcolemma</location>
    </subcellularLocation>
    <text evidence="3">Localized on the apical membrane of jejunum villi, but also on lateral plasma membranes of the villi. Transport to the cell membrane is dependent on RAB11A.</text>
</comment>
<comment type="tissue specificity">
    <text evidence="5">Detected in jejunum. Detected at the intestinal brush-border membrane (at protein level). Detected in duodenum, jejunum and kidney.</text>
</comment>
<comment type="similarity">
    <text evidence="7">Belongs to the major facilitator superfamily. Sugar transporter (TC 2.A.1.1) family. Glucose transporter subfamily.</text>
</comment>
<accession>P46408</accession>
<reference key="1">
    <citation type="journal article" date="1994" name="Biochem. J.">
        <title>Characterization of the rabbit intestinal fructose transporter (GLUT5).</title>
        <authorList>
            <person name="Miyamoto K."/>
            <person name="Tatsumi S."/>
            <person name="Morimoto A."/>
            <person name="Minami H."/>
            <person name="Yamamoto H."/>
            <person name="Sone K."/>
            <person name="Taketani Y."/>
            <person name="Nakabou Y."/>
            <person name="Oka T."/>
            <person name="Takeda E."/>
        </authorList>
    </citation>
    <scope>NUCLEOTIDE SEQUENCE [MRNA]</scope>
    <scope>FUNCTION</scope>
    <scope>SUBCELLULAR LOCATION</scope>
    <scope>TISSUE SPECIFICITY</scope>
    <source>
        <strain>New Zealand white</strain>
        <tissue>Small intestine</tissue>
    </source>
</reference>
<evidence type="ECO:0000250" key="1">
    <source>
        <dbReference type="UniProtKB" id="P22732"/>
    </source>
</evidence>
<evidence type="ECO:0000250" key="2">
    <source>
        <dbReference type="UniProtKB" id="P43427"/>
    </source>
</evidence>
<evidence type="ECO:0000250" key="3">
    <source>
        <dbReference type="UniProtKB" id="Q9WV38"/>
    </source>
</evidence>
<evidence type="ECO:0000255" key="4"/>
<evidence type="ECO:0000269" key="5">
    <source>
    </source>
</evidence>
<evidence type="ECO:0000303" key="6">
    <source>
    </source>
</evidence>
<evidence type="ECO:0000305" key="7"/>
<protein>
    <recommendedName>
        <fullName evidence="7">Solute carrier family 2, facilitated glucose transporter member 5</fullName>
    </recommendedName>
    <alternativeName>
        <fullName evidence="7">Fructose transporter</fullName>
    </alternativeName>
    <alternativeName>
        <fullName evidence="6">Glucose transporter type 5, small intestine</fullName>
        <shortName evidence="6">GLUT-5</shortName>
    </alternativeName>
</protein>
<dbReference type="EMBL" id="D26482">
    <property type="protein sequence ID" value="BAA05492.1"/>
    <property type="molecule type" value="mRNA"/>
</dbReference>
<dbReference type="PIR" id="S53322">
    <property type="entry name" value="S53322"/>
</dbReference>
<dbReference type="RefSeq" id="NP_001075671.1">
    <property type="nucleotide sequence ID" value="NM_001082202.1"/>
</dbReference>
<dbReference type="SMR" id="P46408"/>
<dbReference type="FunCoup" id="P46408">
    <property type="interactions" value="57"/>
</dbReference>
<dbReference type="GlyCosmos" id="P46408">
    <property type="glycosylation" value="1 site, No reported glycans"/>
</dbReference>
<dbReference type="InParanoid" id="P46408"/>
<dbReference type="Proteomes" id="UP000001811">
    <property type="component" value="Unplaced"/>
</dbReference>
<dbReference type="GO" id="GO:0016324">
    <property type="term" value="C:apical plasma membrane"/>
    <property type="evidence" value="ECO:0000250"/>
    <property type="project" value="UniProtKB"/>
</dbReference>
<dbReference type="GO" id="GO:0005886">
    <property type="term" value="C:plasma membrane"/>
    <property type="evidence" value="ECO:0000250"/>
    <property type="project" value="UniProtKB"/>
</dbReference>
<dbReference type="GO" id="GO:0042383">
    <property type="term" value="C:sarcolemma"/>
    <property type="evidence" value="ECO:0000250"/>
    <property type="project" value="UniProtKB"/>
</dbReference>
<dbReference type="GO" id="GO:0055056">
    <property type="term" value="F:D-glucose transmembrane transporter activity"/>
    <property type="evidence" value="ECO:0007669"/>
    <property type="project" value="TreeGrafter"/>
</dbReference>
<dbReference type="GO" id="GO:0070061">
    <property type="term" value="F:fructose binding"/>
    <property type="evidence" value="ECO:0000250"/>
    <property type="project" value="UniProtKB"/>
</dbReference>
<dbReference type="GO" id="GO:0005353">
    <property type="term" value="F:fructose transmembrane transporter activity"/>
    <property type="evidence" value="ECO:0000250"/>
    <property type="project" value="UniProtKB"/>
</dbReference>
<dbReference type="GO" id="GO:0071332">
    <property type="term" value="P:cellular response to fructose stimulus"/>
    <property type="evidence" value="ECO:0000250"/>
    <property type="project" value="UniProtKB"/>
</dbReference>
<dbReference type="GO" id="GO:0046323">
    <property type="term" value="P:D-glucose import"/>
    <property type="evidence" value="ECO:0007669"/>
    <property type="project" value="TreeGrafter"/>
</dbReference>
<dbReference type="GO" id="GO:0070837">
    <property type="term" value="P:dehydroascorbic acid transport"/>
    <property type="evidence" value="ECO:0007669"/>
    <property type="project" value="TreeGrafter"/>
</dbReference>
<dbReference type="GO" id="GO:1990539">
    <property type="term" value="P:fructose import across plasma membrane"/>
    <property type="evidence" value="ECO:0000250"/>
    <property type="project" value="UniProtKB"/>
</dbReference>
<dbReference type="GO" id="GO:0003044">
    <property type="term" value="P:regulation of systemic arterial blood pressure mediated by a chemical signal"/>
    <property type="evidence" value="ECO:0000250"/>
    <property type="project" value="UniProtKB"/>
</dbReference>
<dbReference type="GO" id="GO:0009750">
    <property type="term" value="P:response to fructose"/>
    <property type="evidence" value="ECO:0000250"/>
    <property type="project" value="UniProtKB"/>
</dbReference>
<dbReference type="FunFam" id="1.20.1250.20:FF:001511">
    <property type="entry name" value="Solute carrier family 2, facilitated glucose transporter member 5"/>
    <property type="match status" value="1"/>
</dbReference>
<dbReference type="Gene3D" id="1.20.1250.20">
    <property type="entry name" value="MFS general substrate transporter like domains"/>
    <property type="match status" value="1"/>
</dbReference>
<dbReference type="InterPro" id="IPR002442">
    <property type="entry name" value="Fru_transpt_5"/>
</dbReference>
<dbReference type="InterPro" id="IPR045263">
    <property type="entry name" value="GLUT"/>
</dbReference>
<dbReference type="InterPro" id="IPR020846">
    <property type="entry name" value="MFS_dom"/>
</dbReference>
<dbReference type="InterPro" id="IPR005828">
    <property type="entry name" value="MFS_sugar_transport-like"/>
</dbReference>
<dbReference type="InterPro" id="IPR036259">
    <property type="entry name" value="MFS_trans_sf"/>
</dbReference>
<dbReference type="InterPro" id="IPR003663">
    <property type="entry name" value="Sugar/inositol_transpt"/>
</dbReference>
<dbReference type="InterPro" id="IPR005829">
    <property type="entry name" value="Sugar_transporter_CS"/>
</dbReference>
<dbReference type="NCBIfam" id="TIGR00879">
    <property type="entry name" value="SP"/>
    <property type="match status" value="1"/>
</dbReference>
<dbReference type="PANTHER" id="PTHR23503">
    <property type="entry name" value="SOLUTE CARRIER FAMILY 2"/>
    <property type="match status" value="1"/>
</dbReference>
<dbReference type="PANTHER" id="PTHR23503:SF32">
    <property type="entry name" value="SOLUTE CARRIER FAMILY 2, FACILITATED GLUCOSE TRANSPORTER MEMBER 5"/>
    <property type="match status" value="1"/>
</dbReference>
<dbReference type="Pfam" id="PF00083">
    <property type="entry name" value="Sugar_tr"/>
    <property type="match status" value="1"/>
</dbReference>
<dbReference type="PRINTS" id="PR01194">
    <property type="entry name" value="GLUCTRSPORT5"/>
</dbReference>
<dbReference type="PRINTS" id="PR00171">
    <property type="entry name" value="SUGRTRNSPORT"/>
</dbReference>
<dbReference type="SUPFAM" id="SSF103473">
    <property type="entry name" value="MFS general substrate transporter"/>
    <property type="match status" value="1"/>
</dbReference>
<dbReference type="PROSITE" id="PS50850">
    <property type="entry name" value="MFS"/>
    <property type="match status" value="1"/>
</dbReference>
<dbReference type="PROSITE" id="PS00217">
    <property type="entry name" value="SUGAR_TRANSPORT_2"/>
    <property type="match status" value="1"/>
</dbReference>
<sequence>MEQEGQEKKKEGRLTLVLALRTLIAAFGSSFQYAYNVSVCNSPSELMTEFYNDTYYDRTGELIDEFPLTLLWSVTVSMFPSGGFAGSLLVGPLVNKFGRKGALLFNNIFSIVPAILMGCSKVARSFELIIISRLLVGICAGVSSNVVPMYLGELAPKNLRGALGVESQLFITLGILVAQIFGLRSIRQQKGWPILLGLTGGPAAAACPPFFPESPRYLLIGQEPRCRQKALQSLRGWDSVDRELEEIRREDEAARAAGLVSVRALCAMRGLAWQLISVVPLMWQQLSGVNAIYYYDQIYLSPLDTDTQYYTAATGAVNVLMTVCTVFVVESWARLLLLLGFSPLAPTCCVLTAALALQDTVSWMPYISIVCIIVYVIGHAIGPAIRSLYTEIFLQSGRPPTWWGQVHWLSNFTVGLVFPLIQWAGLYSFIIFGVACLSTTVYTFLIVPETKGKSFIEIIRRFIRMNKVEVSPDREELKDFPPDVSE</sequence>